<gene>
    <name evidence="1" type="primary">tmk</name>
    <name type="ordered locus">LAF_0287</name>
</gene>
<organism>
    <name type="scientific">Limosilactobacillus fermentum (strain NBRC 3956 / LMG 18251)</name>
    <name type="common">Lactobacillus fermentum</name>
    <dbReference type="NCBI Taxonomy" id="334390"/>
    <lineage>
        <taxon>Bacteria</taxon>
        <taxon>Bacillati</taxon>
        <taxon>Bacillota</taxon>
        <taxon>Bacilli</taxon>
        <taxon>Lactobacillales</taxon>
        <taxon>Lactobacillaceae</taxon>
        <taxon>Limosilactobacillus</taxon>
    </lineage>
</organism>
<accession>B2GAE1</accession>
<proteinExistence type="inferred from homology"/>
<reference key="1">
    <citation type="journal article" date="2008" name="DNA Res.">
        <title>Comparative genome analysis of Lactobacillus reuteri and Lactobacillus fermentum reveal a genomic island for reuterin and cobalamin production.</title>
        <authorList>
            <person name="Morita H."/>
            <person name="Toh H."/>
            <person name="Fukuda S."/>
            <person name="Horikawa H."/>
            <person name="Oshima K."/>
            <person name="Suzuki T."/>
            <person name="Murakami M."/>
            <person name="Hisamatsu S."/>
            <person name="Kato Y."/>
            <person name="Takizawa T."/>
            <person name="Fukuoka H."/>
            <person name="Yoshimura T."/>
            <person name="Itoh K."/>
            <person name="O'Sullivan D.J."/>
            <person name="McKay L.L."/>
            <person name="Ohno H."/>
            <person name="Kikuchi J."/>
            <person name="Masaoka T."/>
            <person name="Hattori M."/>
        </authorList>
    </citation>
    <scope>NUCLEOTIDE SEQUENCE [LARGE SCALE GENOMIC DNA]</scope>
    <source>
        <strain>NBRC 3956 / LMG 18251</strain>
    </source>
</reference>
<name>KTHY_LIMF3</name>
<evidence type="ECO:0000255" key="1">
    <source>
        <dbReference type="HAMAP-Rule" id="MF_00165"/>
    </source>
</evidence>
<dbReference type="EC" id="2.7.4.9" evidence="1"/>
<dbReference type="EMBL" id="AP008937">
    <property type="protein sequence ID" value="BAG26623.1"/>
    <property type="molecule type" value="Genomic_DNA"/>
</dbReference>
<dbReference type="RefSeq" id="WP_004562764.1">
    <property type="nucleotide sequence ID" value="NC_010610.1"/>
</dbReference>
<dbReference type="SMR" id="B2GAE1"/>
<dbReference type="GeneID" id="83715391"/>
<dbReference type="KEGG" id="lfe:LAF_0287"/>
<dbReference type="eggNOG" id="COG0125">
    <property type="taxonomic scope" value="Bacteria"/>
</dbReference>
<dbReference type="HOGENOM" id="CLU_049131_0_2_9"/>
<dbReference type="Proteomes" id="UP000001697">
    <property type="component" value="Chromosome"/>
</dbReference>
<dbReference type="GO" id="GO:0005829">
    <property type="term" value="C:cytosol"/>
    <property type="evidence" value="ECO:0007669"/>
    <property type="project" value="TreeGrafter"/>
</dbReference>
<dbReference type="GO" id="GO:0005524">
    <property type="term" value="F:ATP binding"/>
    <property type="evidence" value="ECO:0007669"/>
    <property type="project" value="UniProtKB-UniRule"/>
</dbReference>
<dbReference type="GO" id="GO:0004798">
    <property type="term" value="F:dTMP kinase activity"/>
    <property type="evidence" value="ECO:0007669"/>
    <property type="project" value="UniProtKB-UniRule"/>
</dbReference>
<dbReference type="GO" id="GO:0006233">
    <property type="term" value="P:dTDP biosynthetic process"/>
    <property type="evidence" value="ECO:0007669"/>
    <property type="project" value="InterPro"/>
</dbReference>
<dbReference type="GO" id="GO:0006235">
    <property type="term" value="P:dTTP biosynthetic process"/>
    <property type="evidence" value="ECO:0007669"/>
    <property type="project" value="UniProtKB-UniRule"/>
</dbReference>
<dbReference type="GO" id="GO:0006227">
    <property type="term" value="P:dUDP biosynthetic process"/>
    <property type="evidence" value="ECO:0007669"/>
    <property type="project" value="TreeGrafter"/>
</dbReference>
<dbReference type="CDD" id="cd01672">
    <property type="entry name" value="TMPK"/>
    <property type="match status" value="1"/>
</dbReference>
<dbReference type="FunFam" id="3.40.50.300:FF:000225">
    <property type="entry name" value="Thymidylate kinase"/>
    <property type="match status" value="1"/>
</dbReference>
<dbReference type="Gene3D" id="3.40.50.300">
    <property type="entry name" value="P-loop containing nucleotide triphosphate hydrolases"/>
    <property type="match status" value="1"/>
</dbReference>
<dbReference type="HAMAP" id="MF_00165">
    <property type="entry name" value="Thymidylate_kinase"/>
    <property type="match status" value="1"/>
</dbReference>
<dbReference type="InterPro" id="IPR027417">
    <property type="entry name" value="P-loop_NTPase"/>
</dbReference>
<dbReference type="InterPro" id="IPR039430">
    <property type="entry name" value="Thymidylate_kin-like_dom"/>
</dbReference>
<dbReference type="InterPro" id="IPR018095">
    <property type="entry name" value="Thymidylate_kin_CS"/>
</dbReference>
<dbReference type="InterPro" id="IPR018094">
    <property type="entry name" value="Thymidylate_kinase"/>
</dbReference>
<dbReference type="NCBIfam" id="TIGR00041">
    <property type="entry name" value="DTMP_kinase"/>
    <property type="match status" value="1"/>
</dbReference>
<dbReference type="PANTHER" id="PTHR10344">
    <property type="entry name" value="THYMIDYLATE KINASE"/>
    <property type="match status" value="1"/>
</dbReference>
<dbReference type="PANTHER" id="PTHR10344:SF4">
    <property type="entry name" value="UMP-CMP KINASE 2, MITOCHONDRIAL"/>
    <property type="match status" value="1"/>
</dbReference>
<dbReference type="Pfam" id="PF02223">
    <property type="entry name" value="Thymidylate_kin"/>
    <property type="match status" value="1"/>
</dbReference>
<dbReference type="SUPFAM" id="SSF52540">
    <property type="entry name" value="P-loop containing nucleoside triphosphate hydrolases"/>
    <property type="match status" value="1"/>
</dbReference>
<dbReference type="PROSITE" id="PS01331">
    <property type="entry name" value="THYMIDYLATE_KINASE"/>
    <property type="match status" value="1"/>
</dbReference>
<feature type="chain" id="PRO_1000097407" description="Thymidylate kinase">
    <location>
        <begin position="1"/>
        <end position="214"/>
    </location>
</feature>
<feature type="binding site" evidence="1">
    <location>
        <begin position="10"/>
        <end position="17"/>
    </location>
    <ligand>
        <name>ATP</name>
        <dbReference type="ChEBI" id="CHEBI:30616"/>
    </ligand>
</feature>
<comment type="function">
    <text evidence="1">Phosphorylation of dTMP to form dTDP in both de novo and salvage pathways of dTTP synthesis.</text>
</comment>
<comment type="catalytic activity">
    <reaction evidence="1">
        <text>dTMP + ATP = dTDP + ADP</text>
        <dbReference type="Rhea" id="RHEA:13517"/>
        <dbReference type="ChEBI" id="CHEBI:30616"/>
        <dbReference type="ChEBI" id="CHEBI:58369"/>
        <dbReference type="ChEBI" id="CHEBI:63528"/>
        <dbReference type="ChEBI" id="CHEBI:456216"/>
        <dbReference type="EC" id="2.7.4.9"/>
    </reaction>
</comment>
<comment type="similarity">
    <text evidence="1">Belongs to the thymidylate kinase family.</text>
</comment>
<keyword id="KW-0067">ATP-binding</keyword>
<keyword id="KW-0418">Kinase</keyword>
<keyword id="KW-0545">Nucleotide biosynthesis</keyword>
<keyword id="KW-0547">Nucleotide-binding</keyword>
<keyword id="KW-1185">Reference proteome</keyword>
<keyword id="KW-0808">Transferase</keyword>
<protein>
    <recommendedName>
        <fullName evidence="1">Thymidylate kinase</fullName>
        <ecNumber evidence="1">2.7.4.9</ecNumber>
    </recommendedName>
    <alternativeName>
        <fullName evidence="1">dTMP kinase</fullName>
    </alternativeName>
</protein>
<sequence>MSGRFISFEGPDGAGKTSVLTAIRTGLVNQLGDQVVYTREPGGNPIAEQVRAVLLDKQNGAMDDWTEALLYAASRRQHVVETLKPALEAGKLILCDRYLDSSIAYQGGGRELGIDRIWELNQYAIDGLLPDLTIFLDLPVETGLARIEKGRAETINRLDEQTTNFHRRVRQAYLTLAERFPERIVKVNADQELARVIEDVRSAIHARYADLFTN</sequence>